<evidence type="ECO:0000250" key="1"/>
<evidence type="ECO:0000250" key="2">
    <source>
        <dbReference type="UniProtKB" id="P54841"/>
    </source>
</evidence>
<evidence type="ECO:0000250" key="3">
    <source>
        <dbReference type="UniProtKB" id="Q9Y5Q3"/>
    </source>
</evidence>
<evidence type="ECO:0000255" key="4">
    <source>
        <dbReference type="PROSITE-ProRule" id="PRU00978"/>
    </source>
</evidence>
<evidence type="ECO:0000256" key="5">
    <source>
        <dbReference type="SAM" id="MobiDB-lite"/>
    </source>
</evidence>
<evidence type="ECO:0000305" key="6"/>
<proteinExistence type="evidence at transcript level"/>
<feature type="chain" id="PRO_0000366122" description="Transcription factor MafB">
    <location>
        <begin position="1"/>
        <end position="323"/>
    </location>
</feature>
<feature type="domain" description="bZIP" evidence="4">
    <location>
        <begin position="238"/>
        <end position="301"/>
    </location>
</feature>
<feature type="region of interest" description="Disordered" evidence="5">
    <location>
        <begin position="34"/>
        <end position="78"/>
    </location>
</feature>
<feature type="region of interest" description="Disordered" evidence="5">
    <location>
        <begin position="116"/>
        <end position="210"/>
    </location>
</feature>
<feature type="region of interest" description="Basic motif" evidence="4">
    <location>
        <begin position="238"/>
        <end position="263"/>
    </location>
</feature>
<feature type="region of interest" description="Leucine-zipper" evidence="4">
    <location>
        <begin position="266"/>
        <end position="287"/>
    </location>
</feature>
<feature type="compositionally biased region" description="Basic and acidic residues" evidence="5">
    <location>
        <begin position="34"/>
        <end position="43"/>
    </location>
</feature>
<feature type="compositionally biased region" description="Low complexity" evidence="5">
    <location>
        <begin position="54"/>
        <end position="76"/>
    </location>
</feature>
<feature type="compositionally biased region" description="Basic residues" evidence="5">
    <location>
        <begin position="129"/>
        <end position="143"/>
    </location>
</feature>
<feature type="compositionally biased region" description="Basic residues" evidence="5">
    <location>
        <begin position="159"/>
        <end position="168"/>
    </location>
</feature>
<feature type="compositionally biased region" description="Low complexity" evidence="5">
    <location>
        <begin position="192"/>
        <end position="201"/>
    </location>
</feature>
<feature type="cross-link" description="Glycyl lysine isopeptide (Lys-Gly) (interchain with G-Cter in SUMO)" evidence="1">
    <location>
        <position position="32"/>
    </location>
</feature>
<feature type="cross-link" description="Glycyl lysine isopeptide (Lys-Gly) (interchain with G-Cter in SUMO)" evidence="1">
    <location>
        <position position="297"/>
    </location>
</feature>
<name>MAFB_MACFA</name>
<protein>
    <recommendedName>
        <fullName>Transcription factor MafB</fullName>
        <shortName>Maf-B</shortName>
    </recommendedName>
    <alternativeName>
        <fullName>V-maf musculoaponeurotic fibrosarcoma oncogene homolog B</fullName>
    </alternativeName>
</protein>
<comment type="function">
    <text evidence="2 3">Acts as a transcriptional activator or repressor. Plays a pivotal role in regulating lineage-specific hematopoiesis by repressing ETS1-mediated transcription of erythroid-specific genes in myeloid cells. Required for monocytic, macrophage, osteoclast, podocyte and islet beta cell differentiation. Involved in renal tubule survival and F4/80 maturation. Activates the insulin and glucagon promoters. Together with PAX6, transactivates weakly the glucagon gene promoter through the G1 element. SUMO modification controls its transcriptional activity and ability to specify macrophage fate. Binds element G1 on the glucagon promoter. Involved either as an oncogene or as a tumor suppressor, depending on the cell context (By similarity). Required for the transcriptional activation of HOXB3 in the rhombomere r5 in the hindbrain (By similarity).</text>
</comment>
<comment type="subunit">
    <text evidence="1">Homodimer or heterodimer with other bHLH-Zip transcription factors. Binds DNA as a homodimer or a heterodimer. Forms homodimers and heterodimers with FOS, FOSB and FOSL2, but not with JUN proteins (JUN, JUNB and JUND). Interacts with PAX6; the interaction is direct. Interacts with ETS1 and LRP1. Interacts with the intracellular cytoplasmic domain of LRP1 (LRPICD); the interaction results in a moderate reduction of MAFB transcriptional potential (By similarity).</text>
</comment>
<comment type="subcellular location">
    <subcellularLocation>
        <location evidence="4">Nucleus</location>
    </subcellularLocation>
</comment>
<comment type="domain">
    <text evidence="1">The leucine-zipper domain is involved in the interaction with LRPICD.</text>
</comment>
<comment type="PTM">
    <text evidence="1">Sumoylated. Sumoylation on Lys-32 and Lys-297 stimulates its transcriptional repression activity and promotes macrophage differentiation from myeloid progenitors (By similarity).</text>
</comment>
<comment type="similarity">
    <text evidence="6">Belongs to the bZIP family. Maf subfamily.</text>
</comment>
<reference key="1">
    <citation type="submission" date="2005-07" db="EMBL/GenBank/DDBJ databases">
        <title>Analysis of gene expression in cynomolgus monkey tissues by macaque cDNA oligo-chips.</title>
        <authorList>
            <person name="Kobayashi M."/>
            <person name="Tanuma R."/>
            <person name="Hirata M."/>
            <person name="Osada N."/>
            <person name="Kusuda J."/>
            <person name="Sugano S."/>
            <person name="Hashimoto K."/>
        </authorList>
    </citation>
    <scope>NUCLEOTIDE SEQUENCE [LARGE SCALE MRNA]</scope>
    <source>
        <tissue>Parietal cortex</tissue>
    </source>
</reference>
<accession>Q2PFS4</accession>
<gene>
    <name type="primary">MAFB</name>
    <name type="ORF">QnpA-17255</name>
</gene>
<sequence>MAAELSMGPELPTSPLAMEYVNDFDLLKFDVKKEPLGRAERPGRPCTRLQPAGSLSSTPLSTPCSSVPSSPSFSPTEQKTHLEDLYWMASNYQQMNPEALNLTPEDAVEALIGSHPVPQPLQSFDSFRGAHHHHHHHHPHPHHAYPGAGVAHDELGPHAHPHHHHHHQASPPPSSAASPAQQLPTSHPGPGPHATASATAAGGNGSVEDRFSDDQLVSMSVRELNRHLRGFTKDEVIRLKQKRRTLKNRGYAQSCRYKRVQQKHHLENEKTQLIQQVEQLKQEVSRLARERDAHKVKCEKLANSGFREAGSTSDSPSSPEFFL</sequence>
<organism>
    <name type="scientific">Macaca fascicularis</name>
    <name type="common">Crab-eating macaque</name>
    <name type="synonym">Cynomolgus monkey</name>
    <dbReference type="NCBI Taxonomy" id="9541"/>
    <lineage>
        <taxon>Eukaryota</taxon>
        <taxon>Metazoa</taxon>
        <taxon>Chordata</taxon>
        <taxon>Craniata</taxon>
        <taxon>Vertebrata</taxon>
        <taxon>Euteleostomi</taxon>
        <taxon>Mammalia</taxon>
        <taxon>Eutheria</taxon>
        <taxon>Euarchontoglires</taxon>
        <taxon>Primates</taxon>
        <taxon>Haplorrhini</taxon>
        <taxon>Catarrhini</taxon>
        <taxon>Cercopithecidae</taxon>
        <taxon>Cercopithecinae</taxon>
        <taxon>Macaca</taxon>
    </lineage>
</organism>
<dbReference type="EMBL" id="AB220513">
    <property type="protein sequence ID" value="BAE73046.1"/>
    <property type="molecule type" value="mRNA"/>
</dbReference>
<dbReference type="RefSeq" id="NP_001306451.1">
    <property type="nucleotide sequence ID" value="NM_001319522.1"/>
</dbReference>
<dbReference type="SMR" id="Q2PFS4"/>
<dbReference type="STRING" id="9541.ENSMFAP00000012357"/>
<dbReference type="eggNOG" id="KOG4196">
    <property type="taxonomic scope" value="Eukaryota"/>
</dbReference>
<dbReference type="Proteomes" id="UP000233100">
    <property type="component" value="Unplaced"/>
</dbReference>
<dbReference type="GO" id="GO:0005634">
    <property type="term" value="C:nucleus"/>
    <property type="evidence" value="ECO:0007669"/>
    <property type="project" value="UniProtKB-SubCell"/>
</dbReference>
<dbReference type="GO" id="GO:0000981">
    <property type="term" value="F:DNA-binding transcription factor activity, RNA polymerase II-specific"/>
    <property type="evidence" value="ECO:0007669"/>
    <property type="project" value="TreeGrafter"/>
</dbReference>
<dbReference type="GO" id="GO:0000978">
    <property type="term" value="F:RNA polymerase II cis-regulatory region sequence-specific DNA binding"/>
    <property type="evidence" value="ECO:0007669"/>
    <property type="project" value="TreeGrafter"/>
</dbReference>
<dbReference type="GO" id="GO:0043565">
    <property type="term" value="F:sequence-specific DNA binding"/>
    <property type="evidence" value="ECO:0000250"/>
    <property type="project" value="UniProtKB"/>
</dbReference>
<dbReference type="GO" id="GO:0021599">
    <property type="term" value="P:abducens nerve formation"/>
    <property type="evidence" value="ECO:0000250"/>
    <property type="project" value="UniProtKB"/>
</dbReference>
<dbReference type="GO" id="GO:0045444">
    <property type="term" value="P:fat cell differentiation"/>
    <property type="evidence" value="ECO:0000250"/>
    <property type="project" value="UniProtKB"/>
</dbReference>
<dbReference type="GO" id="GO:0045671">
    <property type="term" value="P:negative regulation of osteoclast differentiation"/>
    <property type="evidence" value="ECO:0000250"/>
    <property type="project" value="UniProtKB"/>
</dbReference>
<dbReference type="GO" id="GO:0045893">
    <property type="term" value="P:positive regulation of DNA-templated transcription"/>
    <property type="evidence" value="ECO:0000250"/>
    <property type="project" value="UniProtKB"/>
</dbReference>
<dbReference type="GO" id="GO:0006355">
    <property type="term" value="P:regulation of DNA-templated transcription"/>
    <property type="evidence" value="ECO:0000250"/>
    <property type="project" value="UniProtKB"/>
</dbReference>
<dbReference type="CDD" id="cd14718">
    <property type="entry name" value="bZIP_Maf_large"/>
    <property type="match status" value="1"/>
</dbReference>
<dbReference type="FunFam" id="1.20.5.170:FF:000016">
    <property type="entry name" value="MAF bZIP transcription factor"/>
    <property type="match status" value="1"/>
</dbReference>
<dbReference type="Gene3D" id="1.20.5.170">
    <property type="match status" value="1"/>
</dbReference>
<dbReference type="InterPro" id="IPR004827">
    <property type="entry name" value="bZIP"/>
</dbReference>
<dbReference type="InterPro" id="IPR004826">
    <property type="entry name" value="bZIP_Maf"/>
</dbReference>
<dbReference type="InterPro" id="IPR046347">
    <property type="entry name" value="bZIP_sf"/>
</dbReference>
<dbReference type="InterPro" id="IPR013592">
    <property type="entry name" value="Maf_TF_N"/>
</dbReference>
<dbReference type="InterPro" id="IPR008917">
    <property type="entry name" value="TF_DNA-bd_sf"/>
</dbReference>
<dbReference type="InterPro" id="IPR024874">
    <property type="entry name" value="Transcription_factor_Maf_fam"/>
</dbReference>
<dbReference type="PANTHER" id="PTHR10129">
    <property type="entry name" value="TRANSCRIPTION FACTOR MAF"/>
    <property type="match status" value="1"/>
</dbReference>
<dbReference type="PANTHER" id="PTHR10129:SF10">
    <property type="entry name" value="TRANSCRIPTION FACTOR MAFB"/>
    <property type="match status" value="1"/>
</dbReference>
<dbReference type="Pfam" id="PF03131">
    <property type="entry name" value="bZIP_Maf"/>
    <property type="match status" value="1"/>
</dbReference>
<dbReference type="Pfam" id="PF08383">
    <property type="entry name" value="Maf_N"/>
    <property type="match status" value="1"/>
</dbReference>
<dbReference type="SMART" id="SM00338">
    <property type="entry name" value="BRLZ"/>
    <property type="match status" value="1"/>
</dbReference>
<dbReference type="SUPFAM" id="SSF47454">
    <property type="entry name" value="A DNA-binding domain in eukaryotic transcription factors"/>
    <property type="match status" value="1"/>
</dbReference>
<dbReference type="SUPFAM" id="SSF57959">
    <property type="entry name" value="Leucine zipper domain"/>
    <property type="match status" value="1"/>
</dbReference>
<dbReference type="PROSITE" id="PS50217">
    <property type="entry name" value="BZIP"/>
    <property type="match status" value="1"/>
</dbReference>
<keyword id="KW-0010">Activator</keyword>
<keyword id="KW-0238">DNA-binding</keyword>
<keyword id="KW-1017">Isopeptide bond</keyword>
<keyword id="KW-0539">Nucleus</keyword>
<keyword id="KW-0656">Proto-oncogene</keyword>
<keyword id="KW-1185">Reference proteome</keyword>
<keyword id="KW-0678">Repressor</keyword>
<keyword id="KW-0804">Transcription</keyword>
<keyword id="KW-0805">Transcription regulation</keyword>
<keyword id="KW-0043">Tumor suppressor</keyword>
<keyword id="KW-0832">Ubl conjugation</keyword>